<reference key="1">
    <citation type="journal article" date="1999" name="DNA Res.">
        <title>Complete genome sequence of an aerobic hyper-thermophilic crenarchaeon, Aeropyrum pernix K1.</title>
        <authorList>
            <person name="Kawarabayasi Y."/>
            <person name="Hino Y."/>
            <person name="Horikawa H."/>
            <person name="Yamazaki S."/>
            <person name="Haikawa Y."/>
            <person name="Jin-no K."/>
            <person name="Takahashi M."/>
            <person name="Sekine M."/>
            <person name="Baba S."/>
            <person name="Ankai A."/>
            <person name="Kosugi H."/>
            <person name="Hosoyama A."/>
            <person name="Fukui S."/>
            <person name="Nagai Y."/>
            <person name="Nishijima K."/>
            <person name="Nakazawa H."/>
            <person name="Takamiya M."/>
            <person name="Masuda S."/>
            <person name="Funahashi T."/>
            <person name="Tanaka T."/>
            <person name="Kudoh Y."/>
            <person name="Yamazaki J."/>
            <person name="Kushida N."/>
            <person name="Oguchi A."/>
            <person name="Aoki K."/>
            <person name="Kubota K."/>
            <person name="Nakamura Y."/>
            <person name="Nomura N."/>
            <person name="Sako Y."/>
            <person name="Kikuchi H."/>
        </authorList>
    </citation>
    <scope>NUCLEOTIDE SEQUENCE [LARGE SCALE GENOMIC DNA]</scope>
    <source>
        <strain>ATCC 700893 / DSM 11879 / JCM 9820 / NBRC 100138 / K1</strain>
    </source>
</reference>
<comment type="subunit">
    <text evidence="1">Part of the 30S ribosomal subunit.</text>
</comment>
<comment type="similarity">
    <text evidence="2">Belongs to the eukaryotic ribosomal protein eS8 family.</text>
</comment>
<protein>
    <recommendedName>
        <fullName evidence="2">Small ribosomal subunit protein eS8</fullName>
    </recommendedName>
    <alternativeName>
        <fullName>30S ribosomal protein S8e</fullName>
    </alternativeName>
</protein>
<organism>
    <name type="scientific">Aeropyrum pernix (strain ATCC 700893 / DSM 11879 / JCM 9820 / NBRC 100138 / K1)</name>
    <dbReference type="NCBI Taxonomy" id="272557"/>
    <lineage>
        <taxon>Archaea</taxon>
        <taxon>Thermoproteota</taxon>
        <taxon>Thermoprotei</taxon>
        <taxon>Desulfurococcales</taxon>
        <taxon>Desulfurococcaceae</taxon>
        <taxon>Aeropyrum</taxon>
    </lineage>
</organism>
<dbReference type="EMBL" id="BA000002">
    <property type="protein sequence ID" value="BAA79767.1"/>
    <property type="molecule type" value="Genomic_DNA"/>
</dbReference>
<dbReference type="PIR" id="G72670">
    <property type="entry name" value="G72670"/>
</dbReference>
<dbReference type="RefSeq" id="WP_010865975.1">
    <property type="nucleotide sequence ID" value="NC_000854.2"/>
</dbReference>
<dbReference type="SMR" id="Q9YDY0"/>
<dbReference type="STRING" id="272557.APE_0789"/>
<dbReference type="EnsemblBacteria" id="BAA79767">
    <property type="protein sequence ID" value="BAA79767"/>
    <property type="gene ID" value="APE_0789"/>
</dbReference>
<dbReference type="GeneID" id="1444899"/>
<dbReference type="KEGG" id="ape:APE_0789"/>
<dbReference type="PATRIC" id="fig|272557.25.peg.567"/>
<dbReference type="eggNOG" id="arCOG04154">
    <property type="taxonomic scope" value="Archaea"/>
</dbReference>
<dbReference type="Proteomes" id="UP000002518">
    <property type="component" value="Chromosome"/>
</dbReference>
<dbReference type="GO" id="GO:1990904">
    <property type="term" value="C:ribonucleoprotein complex"/>
    <property type="evidence" value="ECO:0007669"/>
    <property type="project" value="UniProtKB-KW"/>
</dbReference>
<dbReference type="GO" id="GO:0005840">
    <property type="term" value="C:ribosome"/>
    <property type="evidence" value="ECO:0007669"/>
    <property type="project" value="UniProtKB-KW"/>
</dbReference>
<dbReference type="GO" id="GO:0003735">
    <property type="term" value="F:structural constituent of ribosome"/>
    <property type="evidence" value="ECO:0007669"/>
    <property type="project" value="InterPro"/>
</dbReference>
<dbReference type="GO" id="GO:0006412">
    <property type="term" value="P:translation"/>
    <property type="evidence" value="ECO:0007669"/>
    <property type="project" value="UniProtKB-UniRule"/>
</dbReference>
<dbReference type="CDD" id="cd11382">
    <property type="entry name" value="Ribosomal_S8e"/>
    <property type="match status" value="1"/>
</dbReference>
<dbReference type="Gene3D" id="2.40.10.310">
    <property type="match status" value="1"/>
</dbReference>
<dbReference type="HAMAP" id="MF_00029">
    <property type="entry name" value="Ribosomal_eS8"/>
    <property type="match status" value="1"/>
</dbReference>
<dbReference type="InterPro" id="IPR001047">
    <property type="entry name" value="Ribosomal_eS8"/>
</dbReference>
<dbReference type="InterPro" id="IPR018283">
    <property type="entry name" value="Ribosomal_eS8_CS"/>
</dbReference>
<dbReference type="InterPro" id="IPR020919">
    <property type="entry name" value="Ribosomal_protein_eS8_arc"/>
</dbReference>
<dbReference type="InterPro" id="IPR022309">
    <property type="entry name" value="Ribosomal_Se8/biogenesis_NSA2"/>
</dbReference>
<dbReference type="NCBIfam" id="TIGR00307">
    <property type="entry name" value="eS8"/>
    <property type="match status" value="1"/>
</dbReference>
<dbReference type="PANTHER" id="PTHR10394">
    <property type="entry name" value="40S RIBOSOMAL PROTEIN S8"/>
    <property type="match status" value="1"/>
</dbReference>
<dbReference type="Pfam" id="PF01201">
    <property type="entry name" value="Ribosomal_S8e"/>
    <property type="match status" value="1"/>
</dbReference>
<dbReference type="PROSITE" id="PS01193">
    <property type="entry name" value="RIBOSOMAL_S8E"/>
    <property type="match status" value="1"/>
</dbReference>
<keyword id="KW-1185">Reference proteome</keyword>
<keyword id="KW-0687">Ribonucleoprotein</keyword>
<keyword id="KW-0689">Ribosomal protein</keyword>
<feature type="chain" id="PRO_0000122262" description="Small ribosomal subunit protein eS8">
    <location>
        <begin position="1"/>
        <end position="136"/>
    </location>
</feature>
<evidence type="ECO:0000250" key="1"/>
<evidence type="ECO:0000305" key="2"/>
<gene>
    <name type="primary">rps8e</name>
    <name type="ordered locus">APE_0789</name>
</gene>
<accession>Q9YDY0</accession>
<name>RS8E_AERPE</name>
<proteinExistence type="inferred from homology"/>
<sequence length="136" mass="15244">MGIYQWRDKKKPSGGKRRYYYKVKRKYAAGRPPTYTTLSAAEEEERKPVRARGGSYKIKAKKVAFAVVSNPKTGEARKARILRIVETPAHREYARRGIIVKGAVIDTTLGRAVVTSRPGQEGVVNAVLLEEQGQKQ</sequence>